<evidence type="ECO:0000255" key="1">
    <source>
        <dbReference type="HAMAP-Rule" id="MF_00056"/>
    </source>
</evidence>
<gene>
    <name evidence="1" type="primary">kdsA</name>
    <name type="ordered locus">BPP3254</name>
</gene>
<proteinExistence type="inferred from homology"/>
<name>KDSA_BORPA</name>
<organism>
    <name type="scientific">Bordetella parapertussis (strain 12822 / ATCC BAA-587 / NCTC 13253)</name>
    <dbReference type="NCBI Taxonomy" id="257311"/>
    <lineage>
        <taxon>Bacteria</taxon>
        <taxon>Pseudomonadati</taxon>
        <taxon>Pseudomonadota</taxon>
        <taxon>Betaproteobacteria</taxon>
        <taxon>Burkholderiales</taxon>
        <taxon>Alcaligenaceae</taxon>
        <taxon>Bordetella</taxon>
    </lineage>
</organism>
<protein>
    <recommendedName>
        <fullName evidence="1">2-dehydro-3-deoxyphosphooctonate aldolase</fullName>
        <ecNumber evidence="1">2.5.1.55</ecNumber>
    </recommendedName>
    <alternativeName>
        <fullName evidence="1">3-deoxy-D-manno-octulosonic acid 8-phosphate synthase</fullName>
    </alternativeName>
    <alternativeName>
        <fullName evidence="1">KDO-8-phosphate synthase</fullName>
        <shortName evidence="1">KDO 8-P synthase</shortName>
        <shortName evidence="1">KDOPS</shortName>
    </alternativeName>
    <alternativeName>
        <fullName evidence="1">Phospho-2-dehydro-3-deoxyoctonate aldolase</fullName>
    </alternativeName>
</protein>
<reference key="1">
    <citation type="journal article" date="2003" name="Nat. Genet.">
        <title>Comparative analysis of the genome sequences of Bordetella pertussis, Bordetella parapertussis and Bordetella bronchiseptica.</title>
        <authorList>
            <person name="Parkhill J."/>
            <person name="Sebaihia M."/>
            <person name="Preston A."/>
            <person name="Murphy L.D."/>
            <person name="Thomson N.R."/>
            <person name="Harris D.E."/>
            <person name="Holden M.T.G."/>
            <person name="Churcher C.M."/>
            <person name="Bentley S.D."/>
            <person name="Mungall K.L."/>
            <person name="Cerdeno-Tarraga A.-M."/>
            <person name="Temple L."/>
            <person name="James K.D."/>
            <person name="Harris B."/>
            <person name="Quail M.A."/>
            <person name="Achtman M."/>
            <person name="Atkin R."/>
            <person name="Baker S."/>
            <person name="Basham D."/>
            <person name="Bason N."/>
            <person name="Cherevach I."/>
            <person name="Chillingworth T."/>
            <person name="Collins M."/>
            <person name="Cronin A."/>
            <person name="Davis P."/>
            <person name="Doggett J."/>
            <person name="Feltwell T."/>
            <person name="Goble A."/>
            <person name="Hamlin N."/>
            <person name="Hauser H."/>
            <person name="Holroyd S."/>
            <person name="Jagels K."/>
            <person name="Leather S."/>
            <person name="Moule S."/>
            <person name="Norberczak H."/>
            <person name="O'Neil S."/>
            <person name="Ormond D."/>
            <person name="Price C."/>
            <person name="Rabbinowitsch E."/>
            <person name="Rutter S."/>
            <person name="Sanders M."/>
            <person name="Saunders D."/>
            <person name="Seeger K."/>
            <person name="Sharp S."/>
            <person name="Simmonds M."/>
            <person name="Skelton J."/>
            <person name="Squares R."/>
            <person name="Squares S."/>
            <person name="Stevens K."/>
            <person name="Unwin L."/>
            <person name="Whitehead S."/>
            <person name="Barrell B.G."/>
            <person name="Maskell D.J."/>
        </authorList>
    </citation>
    <scope>NUCLEOTIDE SEQUENCE [LARGE SCALE GENOMIC DNA]</scope>
    <source>
        <strain>12822 / ATCC BAA-587 / NCTC 13253</strain>
    </source>
</reference>
<sequence>MMKACGFDIGLDHPFFLIAGPCVIESRELAFETAGRLKEITGKLGVPFIYKSSFDKANRSSGKSFRGPGMDEGLKILADVRAQLDVPVLTDVHDIDQVAPVAAVVDMLQTPAFLCRQTDFIRACAATLKPVNIKKGQFLAPHDMLQVARKARDAALEAGGDGNNILVCERGASFGYNNLVSDMRSLAIMRETDCPVVFDATHSVQLPGGQGASSGGQREFVPVLARAAVAVGVAGLFMETHPNPACAMSDGPNAVPLDRMAELLESLVALDRVTKRSGFLENQFV</sequence>
<comment type="catalytic activity">
    <reaction evidence="1">
        <text>D-arabinose 5-phosphate + phosphoenolpyruvate + H2O = 3-deoxy-alpha-D-manno-2-octulosonate-8-phosphate + phosphate</text>
        <dbReference type="Rhea" id="RHEA:14053"/>
        <dbReference type="ChEBI" id="CHEBI:15377"/>
        <dbReference type="ChEBI" id="CHEBI:43474"/>
        <dbReference type="ChEBI" id="CHEBI:57693"/>
        <dbReference type="ChEBI" id="CHEBI:58702"/>
        <dbReference type="ChEBI" id="CHEBI:85985"/>
        <dbReference type="EC" id="2.5.1.55"/>
    </reaction>
</comment>
<comment type="pathway">
    <text evidence="1">Carbohydrate biosynthesis; 3-deoxy-D-manno-octulosonate biosynthesis; 3-deoxy-D-manno-octulosonate from D-ribulose 5-phosphate: step 2/3.</text>
</comment>
<comment type="pathway">
    <text evidence="1">Bacterial outer membrane biogenesis; lipopolysaccharide biosynthesis.</text>
</comment>
<comment type="subcellular location">
    <subcellularLocation>
        <location evidence="1">Cytoplasm</location>
    </subcellularLocation>
</comment>
<comment type="similarity">
    <text evidence="1">Belongs to the KdsA family.</text>
</comment>
<accession>Q7W5N7</accession>
<dbReference type="EC" id="2.5.1.55" evidence="1"/>
<dbReference type="EMBL" id="BX640433">
    <property type="protein sequence ID" value="CAE38539.1"/>
    <property type="molecule type" value="Genomic_DNA"/>
</dbReference>
<dbReference type="RefSeq" id="WP_003813703.1">
    <property type="nucleotide sequence ID" value="NC_002928.3"/>
</dbReference>
<dbReference type="SMR" id="Q7W5N7"/>
<dbReference type="GeneID" id="93205036"/>
<dbReference type="KEGG" id="bpa:BPP3254"/>
<dbReference type="HOGENOM" id="CLU_036666_0_0_4"/>
<dbReference type="UniPathway" id="UPA00030"/>
<dbReference type="UniPathway" id="UPA00357">
    <property type="reaction ID" value="UER00474"/>
</dbReference>
<dbReference type="Proteomes" id="UP000001421">
    <property type="component" value="Chromosome"/>
</dbReference>
<dbReference type="GO" id="GO:0005737">
    <property type="term" value="C:cytoplasm"/>
    <property type="evidence" value="ECO:0007669"/>
    <property type="project" value="UniProtKB-SubCell"/>
</dbReference>
<dbReference type="GO" id="GO:0008676">
    <property type="term" value="F:3-deoxy-8-phosphooctulonate synthase activity"/>
    <property type="evidence" value="ECO:0007669"/>
    <property type="project" value="UniProtKB-UniRule"/>
</dbReference>
<dbReference type="GO" id="GO:0019294">
    <property type="term" value="P:keto-3-deoxy-D-manno-octulosonic acid biosynthetic process"/>
    <property type="evidence" value="ECO:0007669"/>
    <property type="project" value="UniProtKB-UniRule"/>
</dbReference>
<dbReference type="Gene3D" id="3.20.20.70">
    <property type="entry name" value="Aldolase class I"/>
    <property type="match status" value="1"/>
</dbReference>
<dbReference type="HAMAP" id="MF_00056">
    <property type="entry name" value="KDO8P_synth"/>
    <property type="match status" value="1"/>
</dbReference>
<dbReference type="InterPro" id="IPR013785">
    <property type="entry name" value="Aldolase_TIM"/>
</dbReference>
<dbReference type="InterPro" id="IPR006218">
    <property type="entry name" value="DAHP1/KDSA"/>
</dbReference>
<dbReference type="InterPro" id="IPR006269">
    <property type="entry name" value="KDO8P_synthase"/>
</dbReference>
<dbReference type="NCBIfam" id="TIGR01362">
    <property type="entry name" value="KDO8P_synth"/>
    <property type="match status" value="1"/>
</dbReference>
<dbReference type="NCBIfam" id="NF003543">
    <property type="entry name" value="PRK05198.1"/>
    <property type="match status" value="1"/>
</dbReference>
<dbReference type="PANTHER" id="PTHR21057">
    <property type="entry name" value="PHOSPHO-2-DEHYDRO-3-DEOXYHEPTONATE ALDOLASE"/>
    <property type="match status" value="1"/>
</dbReference>
<dbReference type="Pfam" id="PF00793">
    <property type="entry name" value="DAHP_synth_1"/>
    <property type="match status" value="1"/>
</dbReference>
<dbReference type="SUPFAM" id="SSF51569">
    <property type="entry name" value="Aldolase"/>
    <property type="match status" value="1"/>
</dbReference>
<keyword id="KW-0963">Cytoplasm</keyword>
<keyword id="KW-0448">Lipopolysaccharide biosynthesis</keyword>
<keyword id="KW-0808">Transferase</keyword>
<feature type="chain" id="PRO_0000187104" description="2-dehydro-3-deoxyphosphooctonate aldolase">
    <location>
        <begin position="1"/>
        <end position="285"/>
    </location>
</feature>